<organism>
    <name type="scientific">Bacillus anthracis</name>
    <dbReference type="NCBI Taxonomy" id="1392"/>
    <lineage>
        <taxon>Bacteria</taxon>
        <taxon>Bacillati</taxon>
        <taxon>Bacillota</taxon>
        <taxon>Bacilli</taxon>
        <taxon>Bacillales</taxon>
        <taxon>Bacillaceae</taxon>
        <taxon>Bacillus</taxon>
        <taxon>Bacillus cereus group</taxon>
    </lineage>
</organism>
<name>LEU1_BACAN</name>
<proteinExistence type="inferred from homology"/>
<sequence length="506" mass="55375">MKQILFMDTTLRDGEQSPGVNLNEQEKLQIARQLERLGIHVMEAGFAAASEGDFQSVKRIANTIQNATVMSLARAKESDIRRAYEAVKGAVSPRLHVFLATSDIHMKYKLCMSKEDVLDSIYRSVTLGKSLFPTVQFSAEDATRTARDFLAEAVEVAIRAGANVINIPDTVGYTNPEEYYALFKYLQESVPSYEKAIFSCHCHDDLGMAVANSLAAVEGGALQVEGTINGIGERAGNAALEEVAVALHIRKDFYKAEPSMTLKEIKATSTLVSRLTGMVVSKNKAIVGANAFAHESGIHQDGVLKEVTTYEIIEPALVGESQNLFVLGKHSGRHAFTEKMKELGYEFTNDERDAVFEAFKKLADRKKEITEEDLRALMLGEAAFAAQQYNITQLQVHFVSNSTQCATVVLKDEEGNVFEDAATGSGSIEAIYNAIQRILGLECELADYRIQSITQGQDALAHVHVELKEGAHQVSGFGVAQDVLEASARAYVHAAGKLKSFIQLVK</sequence>
<reference key="1">
    <citation type="journal article" date="2003" name="Nature">
        <title>The genome sequence of Bacillus anthracis Ames and comparison to closely related bacteria.</title>
        <authorList>
            <person name="Read T.D."/>
            <person name="Peterson S.N."/>
            <person name="Tourasse N.J."/>
            <person name="Baillie L.W."/>
            <person name="Paulsen I.T."/>
            <person name="Nelson K.E."/>
            <person name="Tettelin H."/>
            <person name="Fouts D.E."/>
            <person name="Eisen J.A."/>
            <person name="Gill S.R."/>
            <person name="Holtzapple E.K."/>
            <person name="Okstad O.A."/>
            <person name="Helgason E."/>
            <person name="Rilstone J."/>
            <person name="Wu M."/>
            <person name="Kolonay J.F."/>
            <person name="Beanan M.J."/>
            <person name="Dodson R.J."/>
            <person name="Brinkac L.M."/>
            <person name="Gwinn M.L."/>
            <person name="DeBoy R.T."/>
            <person name="Madpu R."/>
            <person name="Daugherty S.C."/>
            <person name="Durkin A.S."/>
            <person name="Haft D.H."/>
            <person name="Nelson W.C."/>
            <person name="Peterson J.D."/>
            <person name="Pop M."/>
            <person name="Khouri H.M."/>
            <person name="Radune D."/>
            <person name="Benton J.L."/>
            <person name="Mahamoud Y."/>
            <person name="Jiang L."/>
            <person name="Hance I.R."/>
            <person name="Weidman J.F."/>
            <person name="Berry K.J."/>
            <person name="Plaut R.D."/>
            <person name="Wolf A.M."/>
            <person name="Watkins K.L."/>
            <person name="Nierman W.C."/>
            <person name="Hazen A."/>
            <person name="Cline R.T."/>
            <person name="Redmond C."/>
            <person name="Thwaite J.E."/>
            <person name="White O."/>
            <person name="Salzberg S.L."/>
            <person name="Thomason B."/>
            <person name="Friedlander A.M."/>
            <person name="Koehler T.M."/>
            <person name="Hanna P.C."/>
            <person name="Kolstoe A.-B."/>
            <person name="Fraser C.M."/>
        </authorList>
    </citation>
    <scope>NUCLEOTIDE SEQUENCE [LARGE SCALE GENOMIC DNA]</scope>
    <source>
        <strain>Ames / isolate Porton</strain>
    </source>
</reference>
<reference key="2">
    <citation type="journal article" date="2009" name="J. Bacteriol.">
        <title>The complete genome sequence of Bacillus anthracis Ames 'Ancestor'.</title>
        <authorList>
            <person name="Ravel J."/>
            <person name="Jiang L."/>
            <person name="Stanley S.T."/>
            <person name="Wilson M.R."/>
            <person name="Decker R.S."/>
            <person name="Read T.D."/>
            <person name="Worsham P."/>
            <person name="Keim P.S."/>
            <person name="Salzberg S.L."/>
            <person name="Fraser-Liggett C.M."/>
            <person name="Rasko D.A."/>
        </authorList>
    </citation>
    <scope>NUCLEOTIDE SEQUENCE [LARGE SCALE GENOMIC DNA]</scope>
    <source>
        <strain>Ames ancestor</strain>
    </source>
</reference>
<reference key="3">
    <citation type="submission" date="2004-01" db="EMBL/GenBank/DDBJ databases">
        <title>Complete genome sequence of Bacillus anthracis Sterne.</title>
        <authorList>
            <person name="Brettin T.S."/>
            <person name="Bruce D."/>
            <person name="Challacombe J.F."/>
            <person name="Gilna P."/>
            <person name="Han C."/>
            <person name="Hill K."/>
            <person name="Hitchcock P."/>
            <person name="Jackson P."/>
            <person name="Keim P."/>
            <person name="Longmire J."/>
            <person name="Lucas S."/>
            <person name="Okinaka R."/>
            <person name="Richardson P."/>
            <person name="Rubin E."/>
            <person name="Tice H."/>
        </authorList>
    </citation>
    <scope>NUCLEOTIDE SEQUENCE [LARGE SCALE GENOMIC DNA]</scope>
    <source>
        <strain>Sterne</strain>
    </source>
</reference>
<keyword id="KW-0028">Amino-acid biosynthesis</keyword>
<keyword id="KW-0100">Branched-chain amino acid biosynthesis</keyword>
<keyword id="KW-0963">Cytoplasm</keyword>
<keyword id="KW-0432">Leucine biosynthesis</keyword>
<keyword id="KW-0464">Manganese</keyword>
<keyword id="KW-0479">Metal-binding</keyword>
<keyword id="KW-1185">Reference proteome</keyword>
<keyword id="KW-0808">Transferase</keyword>
<protein>
    <recommendedName>
        <fullName evidence="1">2-isopropylmalate synthase</fullName>
        <ecNumber evidence="1">2.3.3.13</ecNumber>
    </recommendedName>
    <alternativeName>
        <fullName evidence="1">Alpha-IPM synthase</fullName>
    </alternativeName>
    <alternativeName>
        <fullName evidence="1">Alpha-isopropylmalate synthase</fullName>
    </alternativeName>
</protein>
<accession>Q81T68</accession>
<accession>Q6I1F1</accession>
<accession>Q6KV97</accession>
<dbReference type="EC" id="2.3.3.13" evidence="1"/>
<dbReference type="EMBL" id="AE016879">
    <property type="protein sequence ID" value="AAP25363.1"/>
    <property type="molecule type" value="Genomic_DNA"/>
</dbReference>
<dbReference type="EMBL" id="AE017334">
    <property type="protein sequence ID" value="AAT30516.1"/>
    <property type="molecule type" value="Genomic_DNA"/>
</dbReference>
<dbReference type="EMBL" id="AE017225">
    <property type="protein sequence ID" value="AAT53631.1"/>
    <property type="molecule type" value="Genomic_DNA"/>
</dbReference>
<dbReference type="RefSeq" id="NP_843877.1">
    <property type="nucleotide sequence ID" value="NC_003997.3"/>
</dbReference>
<dbReference type="RefSeq" id="WP_000809586.1">
    <property type="nucleotide sequence ID" value="NZ_WXXJ01000017.1"/>
</dbReference>
<dbReference type="RefSeq" id="YP_027580.1">
    <property type="nucleotide sequence ID" value="NC_005945.1"/>
</dbReference>
<dbReference type="SMR" id="Q81T68"/>
<dbReference type="STRING" id="261594.GBAA_1420"/>
<dbReference type="DNASU" id="1085912"/>
<dbReference type="GeneID" id="45021399"/>
<dbReference type="KEGG" id="ban:BA_1420"/>
<dbReference type="KEGG" id="bar:GBAA_1420"/>
<dbReference type="KEGG" id="bat:BAS1311"/>
<dbReference type="PATRIC" id="fig|198094.11.peg.1393"/>
<dbReference type="eggNOG" id="COG0119">
    <property type="taxonomic scope" value="Bacteria"/>
</dbReference>
<dbReference type="HOGENOM" id="CLU_022158_0_1_9"/>
<dbReference type="OMA" id="NTMRMLV"/>
<dbReference type="OrthoDB" id="9804858at2"/>
<dbReference type="UniPathway" id="UPA00048">
    <property type="reaction ID" value="UER00070"/>
</dbReference>
<dbReference type="Proteomes" id="UP000000427">
    <property type="component" value="Chromosome"/>
</dbReference>
<dbReference type="Proteomes" id="UP000000594">
    <property type="component" value="Chromosome"/>
</dbReference>
<dbReference type="GO" id="GO:0005737">
    <property type="term" value="C:cytoplasm"/>
    <property type="evidence" value="ECO:0007669"/>
    <property type="project" value="UniProtKB-SubCell"/>
</dbReference>
<dbReference type="GO" id="GO:0003852">
    <property type="term" value="F:2-isopropylmalate synthase activity"/>
    <property type="evidence" value="ECO:0007669"/>
    <property type="project" value="UniProtKB-UniRule"/>
</dbReference>
<dbReference type="GO" id="GO:0003985">
    <property type="term" value="F:acetyl-CoA C-acetyltransferase activity"/>
    <property type="evidence" value="ECO:0007669"/>
    <property type="project" value="UniProtKB-UniRule"/>
</dbReference>
<dbReference type="GO" id="GO:0030145">
    <property type="term" value="F:manganese ion binding"/>
    <property type="evidence" value="ECO:0007669"/>
    <property type="project" value="UniProtKB-UniRule"/>
</dbReference>
<dbReference type="GO" id="GO:0009098">
    <property type="term" value="P:L-leucine biosynthetic process"/>
    <property type="evidence" value="ECO:0007669"/>
    <property type="project" value="UniProtKB-UniRule"/>
</dbReference>
<dbReference type="CDD" id="cd07940">
    <property type="entry name" value="DRE_TIM_IPMS"/>
    <property type="match status" value="1"/>
</dbReference>
<dbReference type="FunFam" id="1.10.238.260:FF:000001">
    <property type="entry name" value="2-isopropylmalate synthase"/>
    <property type="match status" value="1"/>
</dbReference>
<dbReference type="FunFam" id="3.20.20.70:FF:000287">
    <property type="entry name" value="2-isopropylmalate synthase"/>
    <property type="match status" value="1"/>
</dbReference>
<dbReference type="FunFam" id="3.30.160.270:FF:000003">
    <property type="entry name" value="2-isopropylmalate synthase"/>
    <property type="match status" value="1"/>
</dbReference>
<dbReference type="Gene3D" id="1.10.238.260">
    <property type="match status" value="1"/>
</dbReference>
<dbReference type="Gene3D" id="3.30.160.270">
    <property type="match status" value="1"/>
</dbReference>
<dbReference type="Gene3D" id="3.20.20.70">
    <property type="entry name" value="Aldolase class I"/>
    <property type="match status" value="1"/>
</dbReference>
<dbReference type="HAMAP" id="MF_01025">
    <property type="entry name" value="LeuA_type1"/>
    <property type="match status" value="1"/>
</dbReference>
<dbReference type="InterPro" id="IPR050073">
    <property type="entry name" value="2-IPM_HCS-like"/>
</dbReference>
<dbReference type="InterPro" id="IPR013709">
    <property type="entry name" value="2-isopropylmalate_synth_dimer"/>
</dbReference>
<dbReference type="InterPro" id="IPR002034">
    <property type="entry name" value="AIPM/Hcit_synth_CS"/>
</dbReference>
<dbReference type="InterPro" id="IPR013785">
    <property type="entry name" value="Aldolase_TIM"/>
</dbReference>
<dbReference type="InterPro" id="IPR054691">
    <property type="entry name" value="LeuA/HCS_post-cat"/>
</dbReference>
<dbReference type="InterPro" id="IPR036230">
    <property type="entry name" value="LeuA_allosteric_dom_sf"/>
</dbReference>
<dbReference type="InterPro" id="IPR005671">
    <property type="entry name" value="LeuA_bact_synth"/>
</dbReference>
<dbReference type="InterPro" id="IPR000891">
    <property type="entry name" value="PYR_CT"/>
</dbReference>
<dbReference type="NCBIfam" id="TIGR00973">
    <property type="entry name" value="leuA_bact"/>
    <property type="match status" value="1"/>
</dbReference>
<dbReference type="NCBIfam" id="NF002086">
    <property type="entry name" value="PRK00915.1-3"/>
    <property type="match status" value="1"/>
</dbReference>
<dbReference type="NCBIfam" id="NF002088">
    <property type="entry name" value="PRK00915.1-5"/>
    <property type="match status" value="1"/>
</dbReference>
<dbReference type="PANTHER" id="PTHR10277:SF9">
    <property type="entry name" value="2-ISOPROPYLMALATE SYNTHASE 1, CHLOROPLASTIC-RELATED"/>
    <property type="match status" value="1"/>
</dbReference>
<dbReference type="PANTHER" id="PTHR10277">
    <property type="entry name" value="HOMOCITRATE SYNTHASE-RELATED"/>
    <property type="match status" value="1"/>
</dbReference>
<dbReference type="Pfam" id="PF22617">
    <property type="entry name" value="HCS_D2"/>
    <property type="match status" value="1"/>
</dbReference>
<dbReference type="Pfam" id="PF00682">
    <property type="entry name" value="HMGL-like"/>
    <property type="match status" value="1"/>
</dbReference>
<dbReference type="Pfam" id="PF08502">
    <property type="entry name" value="LeuA_dimer"/>
    <property type="match status" value="1"/>
</dbReference>
<dbReference type="SMART" id="SM00917">
    <property type="entry name" value="LeuA_dimer"/>
    <property type="match status" value="1"/>
</dbReference>
<dbReference type="SUPFAM" id="SSF110921">
    <property type="entry name" value="2-isopropylmalate synthase LeuA, allosteric (dimerisation) domain"/>
    <property type="match status" value="1"/>
</dbReference>
<dbReference type="SUPFAM" id="SSF51569">
    <property type="entry name" value="Aldolase"/>
    <property type="match status" value="1"/>
</dbReference>
<dbReference type="PROSITE" id="PS00815">
    <property type="entry name" value="AIPM_HOMOCIT_SYNTH_1"/>
    <property type="match status" value="1"/>
</dbReference>
<dbReference type="PROSITE" id="PS00816">
    <property type="entry name" value="AIPM_HOMOCIT_SYNTH_2"/>
    <property type="match status" value="1"/>
</dbReference>
<dbReference type="PROSITE" id="PS50991">
    <property type="entry name" value="PYR_CT"/>
    <property type="match status" value="1"/>
</dbReference>
<comment type="function">
    <text evidence="1">Catalyzes the condensation of the acetyl group of acetyl-CoA with 3-methyl-2-oxobutanoate (2-ketoisovalerate) to form 3-carboxy-3-hydroxy-4-methylpentanoate (2-isopropylmalate).</text>
</comment>
<comment type="catalytic activity">
    <reaction evidence="1">
        <text>3-methyl-2-oxobutanoate + acetyl-CoA + H2O = (2S)-2-isopropylmalate + CoA + H(+)</text>
        <dbReference type="Rhea" id="RHEA:21524"/>
        <dbReference type="ChEBI" id="CHEBI:1178"/>
        <dbReference type="ChEBI" id="CHEBI:11851"/>
        <dbReference type="ChEBI" id="CHEBI:15377"/>
        <dbReference type="ChEBI" id="CHEBI:15378"/>
        <dbReference type="ChEBI" id="CHEBI:57287"/>
        <dbReference type="ChEBI" id="CHEBI:57288"/>
        <dbReference type="EC" id="2.3.3.13"/>
    </reaction>
</comment>
<comment type="cofactor">
    <cofactor evidence="1">
        <name>Mn(2+)</name>
        <dbReference type="ChEBI" id="CHEBI:29035"/>
    </cofactor>
</comment>
<comment type="pathway">
    <text evidence="1">Amino-acid biosynthesis; L-leucine biosynthesis; L-leucine from 3-methyl-2-oxobutanoate: step 1/4.</text>
</comment>
<comment type="subunit">
    <text evidence="1">Homodimer.</text>
</comment>
<comment type="subcellular location">
    <subcellularLocation>
        <location evidence="1">Cytoplasm</location>
    </subcellularLocation>
</comment>
<comment type="similarity">
    <text evidence="1">Belongs to the alpha-IPM synthase/homocitrate synthase family. LeuA type 1 subfamily.</text>
</comment>
<feature type="chain" id="PRO_0000140329" description="2-isopropylmalate synthase">
    <location>
        <begin position="1"/>
        <end position="506"/>
    </location>
</feature>
<feature type="domain" description="Pyruvate carboxyltransferase" evidence="1">
    <location>
        <begin position="4"/>
        <end position="266"/>
    </location>
</feature>
<feature type="region of interest" description="Regulatory domain" evidence="1">
    <location>
        <begin position="390"/>
        <end position="506"/>
    </location>
</feature>
<feature type="binding site" evidence="1">
    <location>
        <position position="13"/>
    </location>
    <ligand>
        <name>Mn(2+)</name>
        <dbReference type="ChEBI" id="CHEBI:29035"/>
    </ligand>
</feature>
<feature type="binding site" evidence="1">
    <location>
        <position position="201"/>
    </location>
    <ligand>
        <name>Mn(2+)</name>
        <dbReference type="ChEBI" id="CHEBI:29035"/>
    </ligand>
</feature>
<feature type="binding site" evidence="1">
    <location>
        <position position="203"/>
    </location>
    <ligand>
        <name>Mn(2+)</name>
        <dbReference type="ChEBI" id="CHEBI:29035"/>
    </ligand>
</feature>
<feature type="binding site" evidence="1">
    <location>
        <position position="237"/>
    </location>
    <ligand>
        <name>Mn(2+)</name>
        <dbReference type="ChEBI" id="CHEBI:29035"/>
    </ligand>
</feature>
<evidence type="ECO:0000255" key="1">
    <source>
        <dbReference type="HAMAP-Rule" id="MF_01025"/>
    </source>
</evidence>
<gene>
    <name evidence="1" type="primary">leuA</name>
    <name type="ordered locus">BA_1420</name>
    <name type="ordered locus">GBAA_1420</name>
    <name type="ordered locus">BAS1311</name>
</gene>